<feature type="chain" id="PRO_0000244958" description="NADH-quinone oxidoreductase subunit H 1">
    <location>
        <begin position="1"/>
        <end position="328"/>
    </location>
</feature>
<feature type="transmembrane region" description="Helical" evidence="1">
    <location>
        <begin position="11"/>
        <end position="31"/>
    </location>
</feature>
<feature type="transmembrane region" description="Helical" evidence="1">
    <location>
        <begin position="81"/>
        <end position="101"/>
    </location>
</feature>
<feature type="transmembrane region" description="Helical" evidence="1">
    <location>
        <begin position="116"/>
        <end position="136"/>
    </location>
</feature>
<feature type="transmembrane region" description="Helical" evidence="1">
    <location>
        <begin position="154"/>
        <end position="174"/>
    </location>
</feature>
<feature type="transmembrane region" description="Helical" evidence="1">
    <location>
        <begin position="189"/>
        <end position="209"/>
    </location>
</feature>
<feature type="transmembrane region" description="Helical" evidence="1">
    <location>
        <begin position="235"/>
        <end position="257"/>
    </location>
</feature>
<feature type="transmembrane region" description="Helical" evidence="1">
    <location>
        <begin position="269"/>
        <end position="289"/>
    </location>
</feature>
<feature type="transmembrane region" description="Helical" evidence="1">
    <location>
        <begin position="308"/>
        <end position="328"/>
    </location>
</feature>
<name>NUOH1_SYMTH</name>
<accession>Q67P15</accession>
<organism>
    <name type="scientific">Symbiobacterium thermophilum (strain DSM 24528 / JCM 14929 / IAM 14863 / T)</name>
    <dbReference type="NCBI Taxonomy" id="292459"/>
    <lineage>
        <taxon>Bacteria</taxon>
        <taxon>Bacillati</taxon>
        <taxon>Bacillota</taxon>
        <taxon>Clostridia</taxon>
        <taxon>Eubacteriales</taxon>
        <taxon>Symbiobacteriaceae</taxon>
        <taxon>Symbiobacterium</taxon>
    </lineage>
</organism>
<evidence type="ECO:0000255" key="1">
    <source>
        <dbReference type="HAMAP-Rule" id="MF_01350"/>
    </source>
</evidence>
<keyword id="KW-1003">Cell membrane</keyword>
<keyword id="KW-0472">Membrane</keyword>
<keyword id="KW-0520">NAD</keyword>
<keyword id="KW-0874">Quinone</keyword>
<keyword id="KW-1185">Reference proteome</keyword>
<keyword id="KW-1278">Translocase</keyword>
<keyword id="KW-0812">Transmembrane</keyword>
<keyword id="KW-1133">Transmembrane helix</keyword>
<keyword id="KW-0830">Ubiquinone</keyword>
<sequence length="328" mass="36524">MNIWMTVLVLVVKAVVLALCVTLAVAVFLLFMRKFLAYFAYRVGPVKVGPWGVLQPIADVIKMLFKEDIMPEQADPLIYRLAPVIAFFCALGVWVVIPWAPRGSWWSSMADPNAGVLVILAIAAMGVYGTALGGWASQNKYGLLGSMRATAQMISYELAMAMSLLGVILMTGSVSMYDIVDAQRNMINLFPQFLGFLVFYIASLAEAGWTPFDLPESETELVAGYHTDYGGMRFGLFFLTELTHAVNSAVLSTTFFLGGYNPWFGLTMIPGFVWFLLKVILMVFVLYWIKCTFPRFRYDRLMVFGWKVLLPVAALNLVGTAIYVALWA</sequence>
<proteinExistence type="inferred from homology"/>
<reference key="1">
    <citation type="journal article" date="2004" name="Nucleic Acids Res.">
        <title>Genome sequence of Symbiobacterium thermophilum, an uncultivable bacterium that depends on microbial commensalism.</title>
        <authorList>
            <person name="Ueda K."/>
            <person name="Yamashita A."/>
            <person name="Ishikawa J."/>
            <person name="Shimada M."/>
            <person name="Watsuji T."/>
            <person name="Morimura K."/>
            <person name="Ikeda H."/>
            <person name="Hattori M."/>
            <person name="Beppu T."/>
        </authorList>
    </citation>
    <scope>NUCLEOTIDE SEQUENCE [LARGE SCALE GENOMIC DNA]</scope>
    <source>
        <strain>DSM 24528 / JCM 14929 / IAM 14863 / T</strain>
    </source>
</reference>
<dbReference type="EC" id="7.1.1.-" evidence="1"/>
<dbReference type="EMBL" id="AP006840">
    <property type="protein sequence ID" value="BAD40578.1"/>
    <property type="molecule type" value="Genomic_DNA"/>
</dbReference>
<dbReference type="RefSeq" id="WP_011195722.1">
    <property type="nucleotide sequence ID" value="NC_006177.1"/>
</dbReference>
<dbReference type="SMR" id="Q67P15"/>
<dbReference type="STRING" id="292459.STH1593"/>
<dbReference type="KEGG" id="sth:STH1593"/>
<dbReference type="eggNOG" id="COG1005">
    <property type="taxonomic scope" value="Bacteria"/>
</dbReference>
<dbReference type="HOGENOM" id="CLU_015134_0_1_9"/>
<dbReference type="OrthoDB" id="9803734at2"/>
<dbReference type="Proteomes" id="UP000000417">
    <property type="component" value="Chromosome"/>
</dbReference>
<dbReference type="GO" id="GO:0005886">
    <property type="term" value="C:plasma membrane"/>
    <property type="evidence" value="ECO:0007669"/>
    <property type="project" value="UniProtKB-SubCell"/>
</dbReference>
<dbReference type="GO" id="GO:0003954">
    <property type="term" value="F:NADH dehydrogenase activity"/>
    <property type="evidence" value="ECO:0007669"/>
    <property type="project" value="TreeGrafter"/>
</dbReference>
<dbReference type="GO" id="GO:0016655">
    <property type="term" value="F:oxidoreductase activity, acting on NAD(P)H, quinone or similar compound as acceptor"/>
    <property type="evidence" value="ECO:0007669"/>
    <property type="project" value="UniProtKB-UniRule"/>
</dbReference>
<dbReference type="GO" id="GO:0048038">
    <property type="term" value="F:quinone binding"/>
    <property type="evidence" value="ECO:0007669"/>
    <property type="project" value="UniProtKB-KW"/>
</dbReference>
<dbReference type="GO" id="GO:0009060">
    <property type="term" value="P:aerobic respiration"/>
    <property type="evidence" value="ECO:0007669"/>
    <property type="project" value="TreeGrafter"/>
</dbReference>
<dbReference type="HAMAP" id="MF_01350">
    <property type="entry name" value="NDH1_NuoH"/>
    <property type="match status" value="1"/>
</dbReference>
<dbReference type="InterPro" id="IPR001694">
    <property type="entry name" value="NADH_UbQ_OxRdtase_su1/FPO"/>
</dbReference>
<dbReference type="InterPro" id="IPR018086">
    <property type="entry name" value="NADH_UbQ_OxRdtase_su1_CS"/>
</dbReference>
<dbReference type="NCBIfam" id="NF004741">
    <property type="entry name" value="PRK06076.1-2"/>
    <property type="match status" value="1"/>
</dbReference>
<dbReference type="PANTHER" id="PTHR11432">
    <property type="entry name" value="NADH DEHYDROGENASE SUBUNIT 1"/>
    <property type="match status" value="1"/>
</dbReference>
<dbReference type="PANTHER" id="PTHR11432:SF3">
    <property type="entry name" value="NADH-UBIQUINONE OXIDOREDUCTASE CHAIN 1"/>
    <property type="match status" value="1"/>
</dbReference>
<dbReference type="Pfam" id="PF00146">
    <property type="entry name" value="NADHdh"/>
    <property type="match status" value="1"/>
</dbReference>
<dbReference type="PROSITE" id="PS00668">
    <property type="entry name" value="COMPLEX1_ND1_2"/>
    <property type="match status" value="1"/>
</dbReference>
<protein>
    <recommendedName>
        <fullName evidence="1">NADH-quinone oxidoreductase subunit H 1</fullName>
        <ecNumber evidence="1">7.1.1.-</ecNumber>
    </recommendedName>
    <alternativeName>
        <fullName evidence="1">NADH dehydrogenase I subunit H 1</fullName>
    </alternativeName>
    <alternativeName>
        <fullName evidence="1">NDH-1 subunit H 1</fullName>
    </alternativeName>
</protein>
<comment type="function">
    <text evidence="1">NDH-1 shuttles electrons from NADH, via FMN and iron-sulfur (Fe-S) centers, to quinones in the respiratory chain. The immediate electron acceptor for the enzyme in this species is believed to be ubiquinone. Couples the redox reaction to proton translocation (for every two electrons transferred, four hydrogen ions are translocated across the cytoplasmic membrane), and thus conserves the redox energy in a proton gradient. This subunit may bind ubiquinone.</text>
</comment>
<comment type="catalytic activity">
    <reaction evidence="1">
        <text>a quinone + NADH + 5 H(+)(in) = a quinol + NAD(+) + 4 H(+)(out)</text>
        <dbReference type="Rhea" id="RHEA:57888"/>
        <dbReference type="ChEBI" id="CHEBI:15378"/>
        <dbReference type="ChEBI" id="CHEBI:24646"/>
        <dbReference type="ChEBI" id="CHEBI:57540"/>
        <dbReference type="ChEBI" id="CHEBI:57945"/>
        <dbReference type="ChEBI" id="CHEBI:132124"/>
    </reaction>
</comment>
<comment type="subunit">
    <text evidence="1">NDH-1 is composed of 14 different subunits. Subunits NuoA, H, J, K, L, M, N constitute the membrane sector of the complex.</text>
</comment>
<comment type="subcellular location">
    <subcellularLocation>
        <location evidence="1">Cell membrane</location>
        <topology evidence="1">Multi-pass membrane protein</topology>
    </subcellularLocation>
</comment>
<comment type="similarity">
    <text evidence="1">Belongs to the complex I subunit 1 family.</text>
</comment>
<gene>
    <name evidence="1" type="primary">nuoH1</name>
    <name type="ordered locus">STH1593</name>
</gene>